<keyword id="KW-0238">DNA-binding</keyword>
<keyword id="KW-0678">Repressor</keyword>
<keyword id="KW-0804">Transcription</keyword>
<keyword id="KW-0805">Transcription regulation</keyword>
<accession>Q8G1Z7</accession>
<accession>G0K7H4</accession>
<evidence type="ECO:0000250" key="1"/>
<evidence type="ECO:0000255" key="2">
    <source>
        <dbReference type="HAMAP-Rule" id="MF_00768"/>
    </source>
</evidence>
<reference key="1">
    <citation type="journal article" date="2002" name="Proc. Natl. Acad. Sci. U.S.A.">
        <title>The Brucella suis genome reveals fundamental similarities between animal and plant pathogens and symbionts.</title>
        <authorList>
            <person name="Paulsen I.T."/>
            <person name="Seshadri R."/>
            <person name="Nelson K.E."/>
            <person name="Eisen J.A."/>
            <person name="Heidelberg J.F."/>
            <person name="Read T.D."/>
            <person name="Dodson R.J."/>
            <person name="Umayam L.A."/>
            <person name="Brinkac L.M."/>
            <person name="Beanan M.J."/>
            <person name="Daugherty S.C."/>
            <person name="DeBoy R.T."/>
            <person name="Durkin A.S."/>
            <person name="Kolonay J.F."/>
            <person name="Madupu R."/>
            <person name="Nelson W.C."/>
            <person name="Ayodeji B."/>
            <person name="Kraul M."/>
            <person name="Shetty J."/>
            <person name="Malek J.A."/>
            <person name="Van Aken S.E."/>
            <person name="Riedmuller S."/>
            <person name="Tettelin H."/>
            <person name="Gill S.R."/>
            <person name="White O."/>
            <person name="Salzberg S.L."/>
            <person name="Hoover D.L."/>
            <person name="Lindler L.E."/>
            <person name="Halling S.M."/>
            <person name="Boyle S.M."/>
            <person name="Fraser C.M."/>
        </authorList>
    </citation>
    <scope>NUCLEOTIDE SEQUENCE [LARGE SCALE GENOMIC DNA]</scope>
    <source>
        <strain>1330</strain>
    </source>
</reference>
<reference key="2">
    <citation type="journal article" date="2011" name="J. Bacteriol.">
        <title>Revised genome sequence of Brucella suis 1330.</title>
        <authorList>
            <person name="Tae H."/>
            <person name="Shallom S."/>
            <person name="Settlage R."/>
            <person name="Preston D."/>
            <person name="Adams L.G."/>
            <person name="Garner H.R."/>
        </authorList>
    </citation>
    <scope>NUCLEOTIDE SEQUENCE [LARGE SCALE GENOMIC DNA]</scope>
    <source>
        <strain>1330</strain>
    </source>
</reference>
<sequence length="198" mass="21590">MPKIGMEPLRRRELIDAAIRTIGQRGSLDVTVAQIAHEAGVSPALAHHYFGGKDKLILATMRHLLRELGRDLNAAIKQANAPHERIAAIIAVNFSAAQFAQETIAAWLTFYVHAQQSDDIKRLLRIYARRLHSNLVFALEQLTSRARANRIAEGAGAMIDGLYIRHALGADAPDAASAIALVEDYIAIQLSGQPSAEN</sequence>
<feature type="chain" id="PRO_0000070579" description="HTH-type transcriptional regulator BetI">
    <location>
        <begin position="1"/>
        <end position="198"/>
    </location>
</feature>
<feature type="domain" description="HTH tetR-type" evidence="2">
    <location>
        <begin position="8"/>
        <end position="68"/>
    </location>
</feature>
<feature type="DNA-binding region" description="H-T-H motif" evidence="2">
    <location>
        <begin position="31"/>
        <end position="50"/>
    </location>
</feature>
<proteinExistence type="inferred from homology"/>
<name>BETI_BRUSU</name>
<gene>
    <name evidence="2" type="primary">betI</name>
    <name type="ordered locus">BR0554</name>
    <name type="ordered locus">BS1330_I0550</name>
</gene>
<comment type="function">
    <text evidence="1">Repressor involved in the biosynthesis of the osmoprotectant glycine betaine. It represses transcription of the choline transporter BetT and the genes of BetAB involved in the synthesis of glycine betaine (By similarity).</text>
</comment>
<comment type="pathway">
    <text>Amine and polyamine biosynthesis; betaine biosynthesis via choline pathway [regulation].</text>
</comment>
<protein>
    <recommendedName>
        <fullName evidence="2">HTH-type transcriptional regulator BetI</fullName>
    </recommendedName>
</protein>
<organism>
    <name type="scientific">Brucella suis biovar 1 (strain 1330)</name>
    <dbReference type="NCBI Taxonomy" id="204722"/>
    <lineage>
        <taxon>Bacteria</taxon>
        <taxon>Pseudomonadati</taxon>
        <taxon>Pseudomonadota</taxon>
        <taxon>Alphaproteobacteria</taxon>
        <taxon>Hyphomicrobiales</taxon>
        <taxon>Brucellaceae</taxon>
        <taxon>Brucella/Ochrobactrum group</taxon>
        <taxon>Brucella</taxon>
    </lineage>
</organism>
<dbReference type="EMBL" id="AE014291">
    <property type="protein sequence ID" value="AAN29485.1"/>
    <property type="molecule type" value="Genomic_DNA"/>
</dbReference>
<dbReference type="EMBL" id="CP002997">
    <property type="protein sequence ID" value="AEM17902.1"/>
    <property type="molecule type" value="Genomic_DNA"/>
</dbReference>
<dbReference type="RefSeq" id="WP_006189969.1">
    <property type="nucleotide sequence ID" value="NZ_KN046804.1"/>
</dbReference>
<dbReference type="SMR" id="Q8G1Z7"/>
<dbReference type="GeneID" id="45051646"/>
<dbReference type="KEGG" id="bms:BR0554"/>
<dbReference type="KEGG" id="bsi:BS1330_I0550"/>
<dbReference type="PATRIC" id="fig|204722.21.peg.2831"/>
<dbReference type="HOGENOM" id="CLU_069356_15_4_5"/>
<dbReference type="UniPathway" id="UPA00529"/>
<dbReference type="Proteomes" id="UP000007104">
    <property type="component" value="Chromosome I"/>
</dbReference>
<dbReference type="GO" id="GO:0003700">
    <property type="term" value="F:DNA-binding transcription factor activity"/>
    <property type="evidence" value="ECO:0007669"/>
    <property type="project" value="UniProtKB-UniRule"/>
</dbReference>
<dbReference type="GO" id="GO:0000976">
    <property type="term" value="F:transcription cis-regulatory region binding"/>
    <property type="evidence" value="ECO:0007669"/>
    <property type="project" value="TreeGrafter"/>
</dbReference>
<dbReference type="GO" id="GO:0019285">
    <property type="term" value="P:glycine betaine biosynthetic process from choline"/>
    <property type="evidence" value="ECO:0007669"/>
    <property type="project" value="UniProtKB-UniRule"/>
</dbReference>
<dbReference type="GO" id="GO:0045892">
    <property type="term" value="P:negative regulation of DNA-templated transcription"/>
    <property type="evidence" value="ECO:0007669"/>
    <property type="project" value="UniProtKB-UniRule"/>
</dbReference>
<dbReference type="Gene3D" id="1.10.357.10">
    <property type="entry name" value="Tetracycline Repressor, domain 2"/>
    <property type="match status" value="1"/>
</dbReference>
<dbReference type="HAMAP" id="MF_00768">
    <property type="entry name" value="HTH_type_BetI"/>
    <property type="match status" value="1"/>
</dbReference>
<dbReference type="InterPro" id="IPR039538">
    <property type="entry name" value="BetI_C"/>
</dbReference>
<dbReference type="InterPro" id="IPR023772">
    <property type="entry name" value="DNA-bd_HTH_TetR-type_CS"/>
</dbReference>
<dbReference type="InterPro" id="IPR009057">
    <property type="entry name" value="Homeodomain-like_sf"/>
</dbReference>
<dbReference type="InterPro" id="IPR050109">
    <property type="entry name" value="HTH-type_TetR-like_transc_reg"/>
</dbReference>
<dbReference type="InterPro" id="IPR001647">
    <property type="entry name" value="HTH_TetR"/>
</dbReference>
<dbReference type="InterPro" id="IPR036271">
    <property type="entry name" value="Tet_transcr_reg_TetR-rel_C_sf"/>
</dbReference>
<dbReference type="InterPro" id="IPR017757">
    <property type="entry name" value="Tscrpt_rep_BetI"/>
</dbReference>
<dbReference type="NCBIfam" id="TIGR03384">
    <property type="entry name" value="betaine_BetI"/>
    <property type="match status" value="1"/>
</dbReference>
<dbReference type="NCBIfam" id="NF001978">
    <property type="entry name" value="PRK00767.1"/>
    <property type="match status" value="1"/>
</dbReference>
<dbReference type="PANTHER" id="PTHR30055:SF234">
    <property type="entry name" value="HTH-TYPE TRANSCRIPTIONAL REGULATOR BETI"/>
    <property type="match status" value="1"/>
</dbReference>
<dbReference type="PANTHER" id="PTHR30055">
    <property type="entry name" value="HTH-TYPE TRANSCRIPTIONAL REGULATOR RUTR"/>
    <property type="match status" value="1"/>
</dbReference>
<dbReference type="Pfam" id="PF13977">
    <property type="entry name" value="TetR_C_6"/>
    <property type="match status" value="1"/>
</dbReference>
<dbReference type="Pfam" id="PF00440">
    <property type="entry name" value="TetR_N"/>
    <property type="match status" value="1"/>
</dbReference>
<dbReference type="PRINTS" id="PR00455">
    <property type="entry name" value="HTHTETR"/>
</dbReference>
<dbReference type="SUPFAM" id="SSF46689">
    <property type="entry name" value="Homeodomain-like"/>
    <property type="match status" value="1"/>
</dbReference>
<dbReference type="SUPFAM" id="SSF48498">
    <property type="entry name" value="Tetracyclin repressor-like, C-terminal domain"/>
    <property type="match status" value="1"/>
</dbReference>
<dbReference type="PROSITE" id="PS01081">
    <property type="entry name" value="HTH_TETR_1"/>
    <property type="match status" value="1"/>
</dbReference>
<dbReference type="PROSITE" id="PS50977">
    <property type="entry name" value="HTH_TETR_2"/>
    <property type="match status" value="1"/>
</dbReference>